<sequence>MEFEMYLKNSGIEFLKDHPLKEFTTFKIGGKARYIVFPKSTKQLIEILTLAKDEAINYIVVGNCSNVLVSDKGYNGAIITTVKIDSFKIDGNLIEAECGAMLSHVARKACEAGLKGLEFAVGIPGTVGGAVYMNAGAYDGEIKDVFERAEVLDENLNPVELGRADMRFSYRNSRLKEEKMVLLRAVFCLKFADREDISPLQKANEFSKRRREKQPLSYPSAGSVFKRPPNNFAGKLIEDAGLKGYRIGGACISEKHAGFIINLGDAKAEDVRKLIYLAQKSVYEKFGILLEPEIQFIGEFETPLFVPVDGQNRR</sequence>
<comment type="function">
    <text evidence="1">Cell wall formation.</text>
</comment>
<comment type="catalytic activity">
    <reaction evidence="1">
        <text>UDP-N-acetyl-alpha-D-muramate + NADP(+) = UDP-N-acetyl-3-O-(1-carboxyvinyl)-alpha-D-glucosamine + NADPH + H(+)</text>
        <dbReference type="Rhea" id="RHEA:12248"/>
        <dbReference type="ChEBI" id="CHEBI:15378"/>
        <dbReference type="ChEBI" id="CHEBI:57783"/>
        <dbReference type="ChEBI" id="CHEBI:58349"/>
        <dbReference type="ChEBI" id="CHEBI:68483"/>
        <dbReference type="ChEBI" id="CHEBI:70757"/>
        <dbReference type="EC" id="1.3.1.98"/>
    </reaction>
</comment>
<comment type="cofactor">
    <cofactor evidence="1">
        <name>FAD</name>
        <dbReference type="ChEBI" id="CHEBI:57692"/>
    </cofactor>
</comment>
<comment type="pathway">
    <text evidence="1">Cell wall biogenesis; peptidoglycan biosynthesis.</text>
</comment>
<comment type="subcellular location">
    <subcellularLocation>
        <location evidence="1">Cytoplasm</location>
    </subcellularLocation>
</comment>
<comment type="similarity">
    <text evidence="1">Belongs to the MurB family.</text>
</comment>
<name>MURB_CALBD</name>
<evidence type="ECO:0000255" key="1">
    <source>
        <dbReference type="HAMAP-Rule" id="MF_00037"/>
    </source>
</evidence>
<gene>
    <name evidence="1" type="primary">murB</name>
    <name type="ordered locus">Athe_0319</name>
</gene>
<organism>
    <name type="scientific">Caldicellulosiruptor bescii (strain ATCC BAA-1888 / DSM 6725 / KCTC 15123 / Z-1320)</name>
    <name type="common">Anaerocellum thermophilum</name>
    <dbReference type="NCBI Taxonomy" id="521460"/>
    <lineage>
        <taxon>Bacteria</taxon>
        <taxon>Bacillati</taxon>
        <taxon>Bacillota</taxon>
        <taxon>Bacillota incertae sedis</taxon>
        <taxon>Caldicellulosiruptorales</taxon>
        <taxon>Caldicellulosiruptoraceae</taxon>
        <taxon>Caldicellulosiruptor</taxon>
    </lineage>
</organism>
<protein>
    <recommendedName>
        <fullName evidence="1">UDP-N-acetylenolpyruvoylglucosamine reductase</fullName>
        <ecNumber evidence="1">1.3.1.98</ecNumber>
    </recommendedName>
    <alternativeName>
        <fullName evidence="1">UDP-N-acetylmuramate dehydrogenase</fullName>
    </alternativeName>
</protein>
<reference key="1">
    <citation type="submission" date="2009-01" db="EMBL/GenBank/DDBJ databases">
        <title>Complete sequence of chromosome of Caldicellulosiruptor becscii DSM 6725.</title>
        <authorList>
            <person name="Lucas S."/>
            <person name="Copeland A."/>
            <person name="Lapidus A."/>
            <person name="Glavina del Rio T."/>
            <person name="Tice H."/>
            <person name="Bruce D."/>
            <person name="Goodwin L."/>
            <person name="Pitluck S."/>
            <person name="Sims D."/>
            <person name="Meincke L."/>
            <person name="Brettin T."/>
            <person name="Detter J.C."/>
            <person name="Han C."/>
            <person name="Larimer F."/>
            <person name="Land M."/>
            <person name="Hauser L."/>
            <person name="Kyrpides N."/>
            <person name="Ovchinnikova G."/>
            <person name="Kataeva I."/>
            <person name="Adams M.W.W."/>
        </authorList>
    </citation>
    <scope>NUCLEOTIDE SEQUENCE [LARGE SCALE GENOMIC DNA]</scope>
    <source>
        <strain>ATCC BAA-1888 / DSM 6725 / KCTC 15123 / Z-1320</strain>
    </source>
</reference>
<keyword id="KW-0131">Cell cycle</keyword>
<keyword id="KW-0132">Cell division</keyword>
<keyword id="KW-0133">Cell shape</keyword>
<keyword id="KW-0961">Cell wall biogenesis/degradation</keyword>
<keyword id="KW-0963">Cytoplasm</keyword>
<keyword id="KW-0274">FAD</keyword>
<keyword id="KW-0285">Flavoprotein</keyword>
<keyword id="KW-0521">NADP</keyword>
<keyword id="KW-0560">Oxidoreductase</keyword>
<keyword id="KW-0573">Peptidoglycan synthesis</keyword>
<dbReference type="EC" id="1.3.1.98" evidence="1"/>
<dbReference type="EMBL" id="CP001393">
    <property type="protein sequence ID" value="ACM59459.1"/>
    <property type="molecule type" value="Genomic_DNA"/>
</dbReference>
<dbReference type="RefSeq" id="WP_015906924.1">
    <property type="nucleotide sequence ID" value="NC_012034.1"/>
</dbReference>
<dbReference type="SMR" id="B9MN03"/>
<dbReference type="STRING" id="521460.Athe_0319"/>
<dbReference type="GeneID" id="31771686"/>
<dbReference type="KEGG" id="ate:Athe_0319"/>
<dbReference type="eggNOG" id="COG0812">
    <property type="taxonomic scope" value="Bacteria"/>
</dbReference>
<dbReference type="HOGENOM" id="CLU_035304_1_1_9"/>
<dbReference type="UniPathway" id="UPA00219"/>
<dbReference type="Proteomes" id="UP000007723">
    <property type="component" value="Chromosome"/>
</dbReference>
<dbReference type="GO" id="GO:0005829">
    <property type="term" value="C:cytosol"/>
    <property type="evidence" value="ECO:0007669"/>
    <property type="project" value="TreeGrafter"/>
</dbReference>
<dbReference type="GO" id="GO:0071949">
    <property type="term" value="F:FAD binding"/>
    <property type="evidence" value="ECO:0007669"/>
    <property type="project" value="InterPro"/>
</dbReference>
<dbReference type="GO" id="GO:0008762">
    <property type="term" value="F:UDP-N-acetylmuramate dehydrogenase activity"/>
    <property type="evidence" value="ECO:0007669"/>
    <property type="project" value="UniProtKB-UniRule"/>
</dbReference>
<dbReference type="GO" id="GO:0051301">
    <property type="term" value="P:cell division"/>
    <property type="evidence" value="ECO:0007669"/>
    <property type="project" value="UniProtKB-KW"/>
</dbReference>
<dbReference type="GO" id="GO:0071555">
    <property type="term" value="P:cell wall organization"/>
    <property type="evidence" value="ECO:0007669"/>
    <property type="project" value="UniProtKB-KW"/>
</dbReference>
<dbReference type="GO" id="GO:0009252">
    <property type="term" value="P:peptidoglycan biosynthetic process"/>
    <property type="evidence" value="ECO:0007669"/>
    <property type="project" value="UniProtKB-UniRule"/>
</dbReference>
<dbReference type="GO" id="GO:0008360">
    <property type="term" value="P:regulation of cell shape"/>
    <property type="evidence" value="ECO:0007669"/>
    <property type="project" value="UniProtKB-KW"/>
</dbReference>
<dbReference type="Gene3D" id="3.30.465.10">
    <property type="match status" value="1"/>
</dbReference>
<dbReference type="Gene3D" id="3.90.78.10">
    <property type="entry name" value="UDP-N-acetylenolpyruvoylglucosamine reductase, C-terminal domain"/>
    <property type="match status" value="1"/>
</dbReference>
<dbReference type="Gene3D" id="3.30.43.10">
    <property type="entry name" value="Uridine Diphospho-n-acetylenolpyruvylglucosamine Reductase, domain 2"/>
    <property type="match status" value="1"/>
</dbReference>
<dbReference type="HAMAP" id="MF_00037">
    <property type="entry name" value="MurB"/>
    <property type="match status" value="1"/>
</dbReference>
<dbReference type="InterPro" id="IPR016166">
    <property type="entry name" value="FAD-bd_PCMH"/>
</dbReference>
<dbReference type="InterPro" id="IPR036318">
    <property type="entry name" value="FAD-bd_PCMH-like_sf"/>
</dbReference>
<dbReference type="InterPro" id="IPR016167">
    <property type="entry name" value="FAD-bd_PCMH_sub1"/>
</dbReference>
<dbReference type="InterPro" id="IPR016169">
    <property type="entry name" value="FAD-bd_PCMH_sub2"/>
</dbReference>
<dbReference type="InterPro" id="IPR003170">
    <property type="entry name" value="MurB"/>
</dbReference>
<dbReference type="InterPro" id="IPR011601">
    <property type="entry name" value="MurB_C"/>
</dbReference>
<dbReference type="InterPro" id="IPR036635">
    <property type="entry name" value="MurB_C_sf"/>
</dbReference>
<dbReference type="InterPro" id="IPR006094">
    <property type="entry name" value="Oxid_FAD_bind_N"/>
</dbReference>
<dbReference type="NCBIfam" id="TIGR00179">
    <property type="entry name" value="murB"/>
    <property type="match status" value="1"/>
</dbReference>
<dbReference type="NCBIfam" id="NF010480">
    <property type="entry name" value="PRK13905.1"/>
    <property type="match status" value="1"/>
</dbReference>
<dbReference type="PANTHER" id="PTHR21071">
    <property type="entry name" value="UDP-N-ACETYLENOLPYRUVOYLGLUCOSAMINE REDUCTASE"/>
    <property type="match status" value="1"/>
</dbReference>
<dbReference type="PANTHER" id="PTHR21071:SF4">
    <property type="entry name" value="UDP-N-ACETYLENOLPYRUVOYLGLUCOSAMINE REDUCTASE"/>
    <property type="match status" value="1"/>
</dbReference>
<dbReference type="Pfam" id="PF01565">
    <property type="entry name" value="FAD_binding_4"/>
    <property type="match status" value="1"/>
</dbReference>
<dbReference type="Pfam" id="PF02873">
    <property type="entry name" value="MurB_C"/>
    <property type="match status" value="1"/>
</dbReference>
<dbReference type="SUPFAM" id="SSF56176">
    <property type="entry name" value="FAD-binding/transporter-associated domain-like"/>
    <property type="match status" value="1"/>
</dbReference>
<dbReference type="SUPFAM" id="SSF56194">
    <property type="entry name" value="Uridine diphospho-N-Acetylenolpyruvylglucosamine reductase, MurB, C-terminal domain"/>
    <property type="match status" value="1"/>
</dbReference>
<dbReference type="PROSITE" id="PS51387">
    <property type="entry name" value="FAD_PCMH"/>
    <property type="match status" value="1"/>
</dbReference>
<feature type="chain" id="PRO_1000191394" description="UDP-N-acetylenolpyruvoylglucosamine reductase">
    <location>
        <begin position="1"/>
        <end position="314"/>
    </location>
</feature>
<feature type="domain" description="FAD-binding PCMH-type" evidence="1">
    <location>
        <begin position="27"/>
        <end position="192"/>
    </location>
</feature>
<feature type="active site" evidence="1">
    <location>
        <position position="171"/>
    </location>
</feature>
<feature type="active site" description="Proton donor" evidence="1">
    <location>
        <position position="223"/>
    </location>
</feature>
<feature type="active site" evidence="1">
    <location>
        <position position="293"/>
    </location>
</feature>
<proteinExistence type="inferred from homology"/>
<accession>B9MN03</accession>